<comment type="subcellular location">
    <subcellularLocation>
        <location evidence="4">Secreted</location>
    </subcellularLocation>
</comment>
<comment type="tissue specificity">
    <text evidence="4">Expressed by the venom gland.</text>
</comment>
<comment type="PTM">
    <text evidence="3">Contains 3 disulfide bonds.</text>
</comment>
<comment type="similarity">
    <text evidence="3">Belongs to the scoloptoxin-10 family.</text>
</comment>
<comment type="caution">
    <text evidence="4">All C.westwoodi family members described in 'Undeheim et al., 2014' have not been imported into UniProtKB. Please, refer to this paper to access them.</text>
</comment>
<comment type="online information" name="National Center for Biotechnology Information (NCBI)">
    <link uri="https://www.ncbi.nlm.nih.gov/nuccore/GASL01000037"/>
</comment>
<reference key="1">
    <citation type="journal article" date="2014" name="Mol. Biol. Evol.">
        <title>Clawing through evolution: toxin diversification and convergence in the ancient lineage Chilopoda (centipedes).</title>
        <authorList>
            <person name="Undheim E.A."/>
            <person name="Jones A."/>
            <person name="Clauser K.R."/>
            <person name="Holland J.W."/>
            <person name="Pineda S.S."/>
            <person name="King G.F."/>
            <person name="Fry B.G."/>
        </authorList>
    </citation>
    <scope>NUCLEOTIDE SEQUENCE [MRNA]</scope>
    <scope>NOMENCLATURE</scope>
    <source>
        <tissue>Venom gland</tissue>
    </source>
</reference>
<dbReference type="SMR" id="P0DPY9"/>
<dbReference type="GO" id="GO:0005576">
    <property type="term" value="C:extracellular region"/>
    <property type="evidence" value="ECO:0007669"/>
    <property type="project" value="UniProtKB-SubCell"/>
</dbReference>
<dbReference type="GO" id="GO:0090729">
    <property type="term" value="F:toxin activity"/>
    <property type="evidence" value="ECO:0007669"/>
    <property type="project" value="UniProtKB-KW"/>
</dbReference>
<organism>
    <name type="scientific">Cormocephalus westwoodi</name>
    <name type="common">Westwood's green centipede</name>
    <dbReference type="NCBI Taxonomy" id="1096223"/>
    <lineage>
        <taxon>Eukaryota</taxon>
        <taxon>Metazoa</taxon>
        <taxon>Ecdysozoa</taxon>
        <taxon>Arthropoda</taxon>
        <taxon>Myriapoda</taxon>
        <taxon>Chilopoda</taxon>
        <taxon>Pleurostigmophora</taxon>
        <taxon>Scolopendromorpha</taxon>
        <taxon>Scolopendridae</taxon>
        <taxon>Cormocephalus</taxon>
    </lineage>
</organism>
<feature type="signal peptide" evidence="1">
    <location>
        <begin position="1"/>
        <end position="23"/>
    </location>
</feature>
<feature type="chain" id="PRO_0000446748" description="U-scoloptoxin(10)-Cw1a" evidence="3">
    <location>
        <begin position="24"/>
        <end position="104"/>
    </location>
</feature>
<name>TXA1A_CORWE</name>
<evidence type="ECO:0000255" key="1"/>
<evidence type="ECO:0000303" key="2">
    <source>
    </source>
</evidence>
<evidence type="ECO:0000305" key="3"/>
<evidence type="ECO:0000305" key="4">
    <source>
    </source>
</evidence>
<accession>P0DPY9</accession>
<sequence>MNKTVAVFFAVICVICVIKSCKTLKVSDLKEPESYKEAMKMAEKDPPSTRDLAKNIVKANRENCMPNCALVPTCHILSPECCPVKKPICYDLDIVKEAMKKQQG</sequence>
<protein>
    <recommendedName>
        <fullName evidence="2">U-scoloptoxin(10)-Cw1a</fullName>
        <shortName evidence="2">U-SLPTX(10)-Cw1a</shortName>
    </recommendedName>
</protein>
<keyword id="KW-1015">Disulfide bond</keyword>
<keyword id="KW-0964">Secreted</keyword>
<keyword id="KW-0732">Signal</keyword>
<keyword id="KW-0800">Toxin</keyword>
<proteinExistence type="inferred from homology"/>